<proteinExistence type="inferred from homology"/>
<reference key="1">
    <citation type="journal article" date="2006" name="J. Bacteriol.">
        <title>Genome sequence of Aeromonas hydrophila ATCC 7966T: jack of all trades.</title>
        <authorList>
            <person name="Seshadri R."/>
            <person name="Joseph S.W."/>
            <person name="Chopra A.K."/>
            <person name="Sha J."/>
            <person name="Shaw J."/>
            <person name="Graf J."/>
            <person name="Haft D.H."/>
            <person name="Wu M."/>
            <person name="Ren Q."/>
            <person name="Rosovitz M.J."/>
            <person name="Madupu R."/>
            <person name="Tallon L."/>
            <person name="Kim M."/>
            <person name="Jin S."/>
            <person name="Vuong H."/>
            <person name="Stine O.C."/>
            <person name="Ali A."/>
            <person name="Horneman A.J."/>
            <person name="Heidelberg J.F."/>
        </authorList>
    </citation>
    <scope>NUCLEOTIDE SEQUENCE [LARGE SCALE GENOMIC DNA]</scope>
    <source>
        <strain>ATCC 7966 / DSM 30187 / BCRC 13018 / CCUG 14551 / JCM 1027 / KCTC 2358 / NCIMB 9240 / NCTC 8049</strain>
    </source>
</reference>
<feature type="chain" id="PRO_0000353280" description="DNA-directed RNA polymerase subunit beta'">
    <location>
        <begin position="1"/>
        <end position="1434"/>
    </location>
</feature>
<feature type="binding site" evidence="1">
    <location>
        <position position="70"/>
    </location>
    <ligand>
        <name>Zn(2+)</name>
        <dbReference type="ChEBI" id="CHEBI:29105"/>
        <label>1</label>
    </ligand>
</feature>
<feature type="binding site" evidence="1">
    <location>
        <position position="72"/>
    </location>
    <ligand>
        <name>Zn(2+)</name>
        <dbReference type="ChEBI" id="CHEBI:29105"/>
        <label>1</label>
    </ligand>
</feature>
<feature type="binding site" evidence="1">
    <location>
        <position position="85"/>
    </location>
    <ligand>
        <name>Zn(2+)</name>
        <dbReference type="ChEBI" id="CHEBI:29105"/>
        <label>1</label>
    </ligand>
</feature>
<feature type="binding site" evidence="1">
    <location>
        <position position="88"/>
    </location>
    <ligand>
        <name>Zn(2+)</name>
        <dbReference type="ChEBI" id="CHEBI:29105"/>
        <label>1</label>
    </ligand>
</feature>
<feature type="binding site" evidence="1">
    <location>
        <position position="460"/>
    </location>
    <ligand>
        <name>Mg(2+)</name>
        <dbReference type="ChEBI" id="CHEBI:18420"/>
    </ligand>
</feature>
<feature type="binding site" evidence="1">
    <location>
        <position position="462"/>
    </location>
    <ligand>
        <name>Mg(2+)</name>
        <dbReference type="ChEBI" id="CHEBI:18420"/>
    </ligand>
</feature>
<feature type="binding site" evidence="1">
    <location>
        <position position="464"/>
    </location>
    <ligand>
        <name>Mg(2+)</name>
        <dbReference type="ChEBI" id="CHEBI:18420"/>
    </ligand>
</feature>
<feature type="binding site" evidence="1">
    <location>
        <position position="840"/>
    </location>
    <ligand>
        <name>Zn(2+)</name>
        <dbReference type="ChEBI" id="CHEBI:29105"/>
        <label>2</label>
    </ligand>
</feature>
<feature type="binding site" evidence="1">
    <location>
        <position position="915"/>
    </location>
    <ligand>
        <name>Zn(2+)</name>
        <dbReference type="ChEBI" id="CHEBI:29105"/>
        <label>2</label>
    </ligand>
</feature>
<feature type="binding site" evidence="1">
    <location>
        <position position="922"/>
    </location>
    <ligand>
        <name>Zn(2+)</name>
        <dbReference type="ChEBI" id="CHEBI:29105"/>
        <label>2</label>
    </ligand>
</feature>
<feature type="binding site" evidence="1">
    <location>
        <position position="925"/>
    </location>
    <ligand>
        <name>Zn(2+)</name>
        <dbReference type="ChEBI" id="CHEBI:29105"/>
        <label>2</label>
    </ligand>
</feature>
<keyword id="KW-0240">DNA-directed RNA polymerase</keyword>
<keyword id="KW-0460">Magnesium</keyword>
<keyword id="KW-0479">Metal-binding</keyword>
<keyword id="KW-0548">Nucleotidyltransferase</keyword>
<keyword id="KW-1185">Reference proteome</keyword>
<keyword id="KW-0804">Transcription</keyword>
<keyword id="KW-0808">Transferase</keyword>
<keyword id="KW-0862">Zinc</keyword>
<evidence type="ECO:0000255" key="1">
    <source>
        <dbReference type="HAMAP-Rule" id="MF_01322"/>
    </source>
</evidence>
<dbReference type="EC" id="2.7.7.6" evidence="1"/>
<dbReference type="EMBL" id="CP000462">
    <property type="protein sequence ID" value="ABK37110.1"/>
    <property type="molecule type" value="Genomic_DNA"/>
</dbReference>
<dbReference type="RefSeq" id="WP_011707700.1">
    <property type="nucleotide sequence ID" value="NC_008570.1"/>
</dbReference>
<dbReference type="RefSeq" id="YP_858455.1">
    <property type="nucleotide sequence ID" value="NC_008570.1"/>
</dbReference>
<dbReference type="SMR" id="A0KQA4"/>
<dbReference type="STRING" id="380703.AHA_4027"/>
<dbReference type="EnsemblBacteria" id="ABK37110">
    <property type="protein sequence ID" value="ABK37110"/>
    <property type="gene ID" value="AHA_4027"/>
</dbReference>
<dbReference type="GeneID" id="4487348"/>
<dbReference type="KEGG" id="aha:AHA_4027"/>
<dbReference type="PATRIC" id="fig|380703.7.peg.3987"/>
<dbReference type="eggNOG" id="COG0086">
    <property type="taxonomic scope" value="Bacteria"/>
</dbReference>
<dbReference type="HOGENOM" id="CLU_000524_3_1_6"/>
<dbReference type="OrthoDB" id="9815296at2"/>
<dbReference type="Proteomes" id="UP000000756">
    <property type="component" value="Chromosome"/>
</dbReference>
<dbReference type="GO" id="GO:0000428">
    <property type="term" value="C:DNA-directed RNA polymerase complex"/>
    <property type="evidence" value="ECO:0007669"/>
    <property type="project" value="UniProtKB-KW"/>
</dbReference>
<dbReference type="GO" id="GO:0003677">
    <property type="term" value="F:DNA binding"/>
    <property type="evidence" value="ECO:0007669"/>
    <property type="project" value="UniProtKB-UniRule"/>
</dbReference>
<dbReference type="GO" id="GO:0003899">
    <property type="term" value="F:DNA-directed RNA polymerase activity"/>
    <property type="evidence" value="ECO:0007669"/>
    <property type="project" value="UniProtKB-UniRule"/>
</dbReference>
<dbReference type="GO" id="GO:0000287">
    <property type="term" value="F:magnesium ion binding"/>
    <property type="evidence" value="ECO:0007669"/>
    <property type="project" value="UniProtKB-UniRule"/>
</dbReference>
<dbReference type="GO" id="GO:0008270">
    <property type="term" value="F:zinc ion binding"/>
    <property type="evidence" value="ECO:0007669"/>
    <property type="project" value="UniProtKB-UniRule"/>
</dbReference>
<dbReference type="GO" id="GO:0006351">
    <property type="term" value="P:DNA-templated transcription"/>
    <property type="evidence" value="ECO:0007669"/>
    <property type="project" value="UniProtKB-UniRule"/>
</dbReference>
<dbReference type="CDD" id="cd02655">
    <property type="entry name" value="RNAP_beta'_C"/>
    <property type="match status" value="1"/>
</dbReference>
<dbReference type="CDD" id="cd01609">
    <property type="entry name" value="RNAP_beta'_N"/>
    <property type="match status" value="1"/>
</dbReference>
<dbReference type="FunFam" id="1.10.132.30:FF:000003">
    <property type="entry name" value="DNA-directed RNA polymerase subunit beta"/>
    <property type="match status" value="1"/>
</dbReference>
<dbReference type="FunFam" id="1.10.150.390:FF:000002">
    <property type="entry name" value="DNA-directed RNA polymerase subunit beta"/>
    <property type="match status" value="1"/>
</dbReference>
<dbReference type="FunFam" id="1.10.40.90:FF:000001">
    <property type="entry name" value="DNA-directed RNA polymerase subunit beta"/>
    <property type="match status" value="1"/>
</dbReference>
<dbReference type="FunFam" id="4.10.860.120:FF:000001">
    <property type="entry name" value="DNA-directed RNA polymerase subunit beta"/>
    <property type="match status" value="1"/>
</dbReference>
<dbReference type="Gene3D" id="1.10.132.30">
    <property type="match status" value="1"/>
</dbReference>
<dbReference type="Gene3D" id="1.10.150.390">
    <property type="match status" value="1"/>
</dbReference>
<dbReference type="Gene3D" id="1.10.1790.20">
    <property type="match status" value="1"/>
</dbReference>
<dbReference type="Gene3D" id="1.10.40.90">
    <property type="match status" value="1"/>
</dbReference>
<dbReference type="Gene3D" id="2.40.40.20">
    <property type="match status" value="1"/>
</dbReference>
<dbReference type="Gene3D" id="2.40.50.100">
    <property type="match status" value="3"/>
</dbReference>
<dbReference type="Gene3D" id="4.10.860.120">
    <property type="entry name" value="RNA polymerase II, clamp domain"/>
    <property type="match status" value="1"/>
</dbReference>
<dbReference type="Gene3D" id="1.10.274.100">
    <property type="entry name" value="RNA polymerase Rpb1, domain 3"/>
    <property type="match status" value="1"/>
</dbReference>
<dbReference type="HAMAP" id="MF_01322">
    <property type="entry name" value="RNApol_bact_RpoC"/>
    <property type="match status" value="1"/>
</dbReference>
<dbReference type="InterPro" id="IPR045867">
    <property type="entry name" value="DNA-dir_RpoC_beta_prime"/>
</dbReference>
<dbReference type="InterPro" id="IPR012754">
    <property type="entry name" value="DNA-dir_RpoC_beta_prime_bact"/>
</dbReference>
<dbReference type="InterPro" id="IPR000722">
    <property type="entry name" value="RNA_pol_asu"/>
</dbReference>
<dbReference type="InterPro" id="IPR006592">
    <property type="entry name" value="RNA_pol_N"/>
</dbReference>
<dbReference type="InterPro" id="IPR007080">
    <property type="entry name" value="RNA_pol_Rpb1_1"/>
</dbReference>
<dbReference type="InterPro" id="IPR007066">
    <property type="entry name" value="RNA_pol_Rpb1_3"/>
</dbReference>
<dbReference type="InterPro" id="IPR042102">
    <property type="entry name" value="RNA_pol_Rpb1_3_sf"/>
</dbReference>
<dbReference type="InterPro" id="IPR007083">
    <property type="entry name" value="RNA_pol_Rpb1_4"/>
</dbReference>
<dbReference type="InterPro" id="IPR007081">
    <property type="entry name" value="RNA_pol_Rpb1_5"/>
</dbReference>
<dbReference type="InterPro" id="IPR044893">
    <property type="entry name" value="RNA_pol_Rpb1_clamp_domain"/>
</dbReference>
<dbReference type="InterPro" id="IPR038120">
    <property type="entry name" value="Rpb1_funnel_sf"/>
</dbReference>
<dbReference type="NCBIfam" id="TIGR02386">
    <property type="entry name" value="rpoC_TIGR"/>
    <property type="match status" value="1"/>
</dbReference>
<dbReference type="PANTHER" id="PTHR19376">
    <property type="entry name" value="DNA-DIRECTED RNA POLYMERASE"/>
    <property type="match status" value="1"/>
</dbReference>
<dbReference type="PANTHER" id="PTHR19376:SF54">
    <property type="entry name" value="DNA-DIRECTED RNA POLYMERASE SUBUNIT BETA"/>
    <property type="match status" value="1"/>
</dbReference>
<dbReference type="Pfam" id="PF04997">
    <property type="entry name" value="RNA_pol_Rpb1_1"/>
    <property type="match status" value="1"/>
</dbReference>
<dbReference type="Pfam" id="PF00623">
    <property type="entry name" value="RNA_pol_Rpb1_2"/>
    <property type="match status" value="2"/>
</dbReference>
<dbReference type="Pfam" id="PF04983">
    <property type="entry name" value="RNA_pol_Rpb1_3"/>
    <property type="match status" value="1"/>
</dbReference>
<dbReference type="Pfam" id="PF05000">
    <property type="entry name" value="RNA_pol_Rpb1_4"/>
    <property type="match status" value="1"/>
</dbReference>
<dbReference type="Pfam" id="PF04998">
    <property type="entry name" value="RNA_pol_Rpb1_5"/>
    <property type="match status" value="1"/>
</dbReference>
<dbReference type="SMART" id="SM00663">
    <property type="entry name" value="RPOLA_N"/>
    <property type="match status" value="1"/>
</dbReference>
<dbReference type="SUPFAM" id="SSF64484">
    <property type="entry name" value="beta and beta-prime subunits of DNA dependent RNA-polymerase"/>
    <property type="match status" value="1"/>
</dbReference>
<gene>
    <name evidence="1" type="primary">rpoC</name>
    <name type="ordered locus">AHA_4027</name>
</gene>
<accession>A0KQA4</accession>
<name>RPOC_AERHH</name>
<comment type="function">
    <text evidence="1">DNA-dependent RNA polymerase catalyzes the transcription of DNA into RNA using the four ribonucleoside triphosphates as substrates.</text>
</comment>
<comment type="catalytic activity">
    <reaction evidence="1">
        <text>RNA(n) + a ribonucleoside 5'-triphosphate = RNA(n+1) + diphosphate</text>
        <dbReference type="Rhea" id="RHEA:21248"/>
        <dbReference type="Rhea" id="RHEA-COMP:14527"/>
        <dbReference type="Rhea" id="RHEA-COMP:17342"/>
        <dbReference type="ChEBI" id="CHEBI:33019"/>
        <dbReference type="ChEBI" id="CHEBI:61557"/>
        <dbReference type="ChEBI" id="CHEBI:140395"/>
        <dbReference type="EC" id="2.7.7.6"/>
    </reaction>
</comment>
<comment type="cofactor">
    <cofactor evidence="1">
        <name>Mg(2+)</name>
        <dbReference type="ChEBI" id="CHEBI:18420"/>
    </cofactor>
    <text evidence="1">Binds 1 Mg(2+) ion per subunit.</text>
</comment>
<comment type="cofactor">
    <cofactor evidence="1">
        <name>Zn(2+)</name>
        <dbReference type="ChEBI" id="CHEBI:29105"/>
    </cofactor>
    <text evidence="1">Binds 2 Zn(2+) ions per subunit.</text>
</comment>
<comment type="subunit">
    <text evidence="1">The RNAP catalytic core consists of 2 alpha, 1 beta, 1 beta' and 1 omega subunit. When a sigma factor is associated with the core the holoenzyme is formed, which can initiate transcription.</text>
</comment>
<comment type="similarity">
    <text evidence="1">Belongs to the RNA polymerase beta' chain family.</text>
</comment>
<protein>
    <recommendedName>
        <fullName evidence="1">DNA-directed RNA polymerase subunit beta'</fullName>
        <shortName evidence="1">RNAP subunit beta'</shortName>
        <ecNumber evidence="1">2.7.7.6</ecNumber>
    </recommendedName>
    <alternativeName>
        <fullName evidence="1">RNA polymerase subunit beta'</fullName>
    </alternativeName>
    <alternativeName>
        <fullName evidence="1">Transcriptase subunit beta'</fullName>
    </alternativeName>
</protein>
<sequence length="1434" mass="158231">MKDLLKFLKAQTKTEEFDSIKIGLASPDMIRSWSFGEVKKPETINYRTFKPERDGLFCARIFGPVKDYECLCGKYKRLKHRGVICEKCGVEVTQTKVRRERMGHIELASPTAHIWFLKSLPSRIGLLLDMTLRDIERVLYFESYVVIEPGMTNLERSQMLSEEQYLDALEEWGDEFDAKMGAEAILALLRAIDLEGEVRTMREELDQTNSETKRKKTTKRLKLMEAFLQSGNKPEWMIMTVLPVLPPDLRPLVPLDGGRFATSDLNDLYRRVINRNNRLKRLLDLAAPDIIVRNEKRMLQESVDALLDNGRRGRAITGSNKRPLKSLADMIKGKQGRFRQNLLGKRVDYSGRSVITVGPTLRLHQCGLPKKMALELFKPFIYGKLESRGLATTIKAAKKMVEREEAVVWDILDEVIREHPVLLNRAPTLHRLGIQAFEPTLIEGKAIQLHPLVCAAYNADFDGDQMAVHVPLTLEAQLEARALMMSTNNILSPASGEPIIVPSQDVVLGLYYMTRARINAKGEGMVLSGPKEAEKVYRAGLADLHARVKVRITEYLRQEDGSLRAHTEMKNTTVGRAILSLILPKGMEYALIDEPKVLTAAEQADLDANPQNWIKSVSNKALGKKLISRLLNTCYRKQGLKDTVIFADQLMYTGFHYAALSGASVGIDDMVIPDAKKDIIAAAEAEVAEIQDQFLSGLVTAGERYNKVIDIWASANERVSKAMMENLSKERNVNSLGEEEEQASFNSIFMMADSGARGSAAQIRQLAGMRGLMAKPDGSIIETPIVANFREGLNVLQYFISTHGARKGLADTALKTANSGYLTRRLVDVAQDMVITEDDCGTTEGLWMTPLIEGGDVVEPLRERVLGRVVADDVIKPGTEDEVLVARNTLLDEQLCDLLERNSVDRVKVRSAITCETDFGNCAHCYGRDLARGHLVNKGEAVGVIAAQSIGEPGTQLTMRTFHIGGAASRAAAESSIQVKNTGSIKLQNAKFVHNSDDKLVITSRSTELTIMDEMGRTKESHKLPYGSVLEVKDGQAVNAGETVANWDPHTHPIITEVAGRLHFEHMIDGVTITRQTDELTGLSSIVVLDVNERPSAGKEMRPTVKLVDLNGKDVMIPGTDVAAQYFLPGKAIVNLEDGANVGVGDAVARIPQESGGTKDITGGLPRVADLFEARQPKEPAILAEISGTISFGKETKGKRRLVITPTDGGDVYEEMIPKWRNLNVFEGEKVEKGEVLADGPESAHDILRLRGISPVANYIANEVQDVYRLQGVKINDKHIEVIVRQMLRKCEILSAGDTDLIEGEQVEVARVKIANRKLVAEGKTPATFRHILMGITKASLSTESFISAASFQETTRVLTEAAVGGKRDELRGLKENVIVGRLIPAGTGFAYHHGRINQRAAAARAVGVPQVTADEAQQNLADLLNAAGSFDEE</sequence>
<organism>
    <name type="scientific">Aeromonas hydrophila subsp. hydrophila (strain ATCC 7966 / DSM 30187 / BCRC 13018 / CCUG 14551 / JCM 1027 / KCTC 2358 / NCIMB 9240 / NCTC 8049)</name>
    <dbReference type="NCBI Taxonomy" id="380703"/>
    <lineage>
        <taxon>Bacteria</taxon>
        <taxon>Pseudomonadati</taxon>
        <taxon>Pseudomonadota</taxon>
        <taxon>Gammaproteobacteria</taxon>
        <taxon>Aeromonadales</taxon>
        <taxon>Aeromonadaceae</taxon>
        <taxon>Aeromonas</taxon>
    </lineage>
</organism>